<comment type="function">
    <text evidence="1">Produces ATP from ADP in the presence of a proton gradient across the membrane. The alpha chain is a regulatory subunit.</text>
</comment>
<comment type="catalytic activity">
    <reaction evidence="1">
        <text>ATP + H2O + 4 H(+)(in) = ADP + phosphate + 5 H(+)(out)</text>
        <dbReference type="Rhea" id="RHEA:57720"/>
        <dbReference type="ChEBI" id="CHEBI:15377"/>
        <dbReference type="ChEBI" id="CHEBI:15378"/>
        <dbReference type="ChEBI" id="CHEBI:30616"/>
        <dbReference type="ChEBI" id="CHEBI:43474"/>
        <dbReference type="ChEBI" id="CHEBI:456216"/>
        <dbReference type="EC" id="7.1.2.2"/>
    </reaction>
</comment>
<comment type="subunit">
    <text evidence="1">F-type ATPases have 2 components, CF(1) - the catalytic core - and CF(0) - the membrane proton channel. CF(1) has five subunits: alpha(3), beta(3), gamma(1), delta(1), epsilon(1). CF(0) has three main subunits: a(1), b(2) and c(9-12). The alpha and beta chains form an alternating ring which encloses part of the gamma chain. CF(1) is attached to CF(0) by a central stalk formed by the gamma and epsilon chains, while a peripheral stalk is formed by the delta and b chains.</text>
</comment>
<comment type="subcellular location">
    <subcellularLocation>
        <location evidence="1">Cell inner membrane</location>
        <topology evidence="1">Peripheral membrane protein</topology>
    </subcellularLocation>
</comment>
<comment type="similarity">
    <text evidence="1">Belongs to the ATPase alpha/beta chains family.</text>
</comment>
<gene>
    <name evidence="1" type="primary">atpA2</name>
    <name type="ordered locus">BURPS1106A_A2645</name>
</gene>
<dbReference type="EC" id="7.1.2.2" evidence="1"/>
<dbReference type="EMBL" id="CP000573">
    <property type="protein sequence ID" value="ABN93049.1"/>
    <property type="molecule type" value="Genomic_DNA"/>
</dbReference>
<dbReference type="RefSeq" id="WP_004530238.1">
    <property type="nucleotide sequence ID" value="NC_009078.1"/>
</dbReference>
<dbReference type="SMR" id="A3P8L5"/>
<dbReference type="KEGG" id="bpl:BURPS1106A_A2645"/>
<dbReference type="HOGENOM" id="CLU_010091_4_0_4"/>
<dbReference type="Proteomes" id="UP000006738">
    <property type="component" value="Chromosome II"/>
</dbReference>
<dbReference type="GO" id="GO:0005886">
    <property type="term" value="C:plasma membrane"/>
    <property type="evidence" value="ECO:0007669"/>
    <property type="project" value="UniProtKB-SubCell"/>
</dbReference>
<dbReference type="GO" id="GO:0045259">
    <property type="term" value="C:proton-transporting ATP synthase complex"/>
    <property type="evidence" value="ECO:0007669"/>
    <property type="project" value="UniProtKB-KW"/>
</dbReference>
<dbReference type="GO" id="GO:0043531">
    <property type="term" value="F:ADP binding"/>
    <property type="evidence" value="ECO:0007669"/>
    <property type="project" value="TreeGrafter"/>
</dbReference>
<dbReference type="GO" id="GO:0005524">
    <property type="term" value="F:ATP binding"/>
    <property type="evidence" value="ECO:0007669"/>
    <property type="project" value="UniProtKB-UniRule"/>
</dbReference>
<dbReference type="GO" id="GO:0046933">
    <property type="term" value="F:proton-transporting ATP synthase activity, rotational mechanism"/>
    <property type="evidence" value="ECO:0007669"/>
    <property type="project" value="UniProtKB-UniRule"/>
</dbReference>
<dbReference type="CDD" id="cd18116">
    <property type="entry name" value="ATP-synt_F1_alpha_N"/>
    <property type="match status" value="1"/>
</dbReference>
<dbReference type="CDD" id="cd01132">
    <property type="entry name" value="F1-ATPase_alpha_CD"/>
    <property type="match status" value="1"/>
</dbReference>
<dbReference type="FunFam" id="3.40.50.300:FF:004039">
    <property type="entry name" value="ATP synthase subunit alpha, mitochondrial"/>
    <property type="match status" value="1"/>
</dbReference>
<dbReference type="Gene3D" id="2.40.30.20">
    <property type="match status" value="1"/>
</dbReference>
<dbReference type="Gene3D" id="1.20.150.20">
    <property type="entry name" value="ATP synthase alpha/beta chain, C-terminal domain"/>
    <property type="match status" value="1"/>
</dbReference>
<dbReference type="Gene3D" id="3.40.50.300">
    <property type="entry name" value="P-loop containing nucleotide triphosphate hydrolases"/>
    <property type="match status" value="1"/>
</dbReference>
<dbReference type="HAMAP" id="MF_01346">
    <property type="entry name" value="ATP_synth_alpha_bact"/>
    <property type="match status" value="1"/>
</dbReference>
<dbReference type="InterPro" id="IPR023366">
    <property type="entry name" value="ATP_synth_asu-like_sf"/>
</dbReference>
<dbReference type="InterPro" id="IPR000793">
    <property type="entry name" value="ATP_synth_asu_C"/>
</dbReference>
<dbReference type="InterPro" id="IPR038376">
    <property type="entry name" value="ATP_synth_asu_C_sf"/>
</dbReference>
<dbReference type="InterPro" id="IPR033732">
    <property type="entry name" value="ATP_synth_F1_a_nt-bd_dom"/>
</dbReference>
<dbReference type="InterPro" id="IPR005294">
    <property type="entry name" value="ATP_synth_F1_asu"/>
</dbReference>
<dbReference type="InterPro" id="IPR020003">
    <property type="entry name" value="ATPase_a/bsu_AS"/>
</dbReference>
<dbReference type="InterPro" id="IPR004100">
    <property type="entry name" value="ATPase_F1/V1/A1_a/bsu_N"/>
</dbReference>
<dbReference type="InterPro" id="IPR036121">
    <property type="entry name" value="ATPase_F1/V1/A1_a/bsu_N_sf"/>
</dbReference>
<dbReference type="InterPro" id="IPR000194">
    <property type="entry name" value="ATPase_F1/V1/A1_a/bsu_nucl-bd"/>
</dbReference>
<dbReference type="InterPro" id="IPR027417">
    <property type="entry name" value="P-loop_NTPase"/>
</dbReference>
<dbReference type="NCBIfam" id="TIGR00962">
    <property type="entry name" value="atpA"/>
    <property type="match status" value="1"/>
</dbReference>
<dbReference type="NCBIfam" id="NF009884">
    <property type="entry name" value="PRK13343.1"/>
    <property type="match status" value="1"/>
</dbReference>
<dbReference type="PANTHER" id="PTHR48082">
    <property type="entry name" value="ATP SYNTHASE SUBUNIT ALPHA, MITOCHONDRIAL"/>
    <property type="match status" value="1"/>
</dbReference>
<dbReference type="PANTHER" id="PTHR48082:SF2">
    <property type="entry name" value="ATP SYNTHASE SUBUNIT ALPHA, MITOCHONDRIAL"/>
    <property type="match status" value="1"/>
</dbReference>
<dbReference type="Pfam" id="PF00006">
    <property type="entry name" value="ATP-synt_ab"/>
    <property type="match status" value="1"/>
</dbReference>
<dbReference type="Pfam" id="PF00306">
    <property type="entry name" value="ATP-synt_ab_C"/>
    <property type="match status" value="1"/>
</dbReference>
<dbReference type="Pfam" id="PF02874">
    <property type="entry name" value="ATP-synt_ab_N"/>
    <property type="match status" value="1"/>
</dbReference>
<dbReference type="SUPFAM" id="SSF47917">
    <property type="entry name" value="C-terminal domain of alpha and beta subunits of F1 ATP synthase"/>
    <property type="match status" value="1"/>
</dbReference>
<dbReference type="SUPFAM" id="SSF50615">
    <property type="entry name" value="N-terminal domain of alpha and beta subunits of F1 ATP synthase"/>
    <property type="match status" value="1"/>
</dbReference>
<dbReference type="SUPFAM" id="SSF52540">
    <property type="entry name" value="P-loop containing nucleoside triphosphate hydrolases"/>
    <property type="match status" value="1"/>
</dbReference>
<dbReference type="PROSITE" id="PS00152">
    <property type="entry name" value="ATPASE_ALPHA_BETA"/>
    <property type="match status" value="1"/>
</dbReference>
<protein>
    <recommendedName>
        <fullName evidence="1">ATP synthase subunit alpha 2</fullName>
        <ecNumber evidence="1">7.1.2.2</ecNumber>
    </recommendedName>
    <alternativeName>
        <fullName evidence="1">ATP synthase F1 sector subunit alpha 2</fullName>
    </alternativeName>
    <alternativeName>
        <fullName evidence="1">F-ATPase subunit alpha 2</fullName>
    </alternativeName>
</protein>
<name>ATPA2_BURP0</name>
<proteinExistence type="inferred from homology"/>
<sequence>MTPTPDAPAAADADAATGAGWLARRRGALARVALAPVAQAIGRVERVADGIAFVSGLEDTMLNEVLRFEGGVTGFAHTLDEDLISVVLLDPDAGVRAQTAVARTGAVLEVPAGPQLLGRVVDPLGRPLDGGAPLDAAHTLPIERAAPAIIERDLVSEPLDTGVLIVDALFTIGRGQRELIIGDRATGKTSLAIDAIVNQRHSDVICVYVAIGQRASAVRRVIDAVRRYGAPERCVFVVAPAACAPGLQWIAPFAGFSIAEYFRDRGQHALVVVDDLTKHAATHRELALLTREPPGREAYPGDIFYVHARLLERAAKLSAALGGGSLSALPIAETDAGNLAAYIPTNLISITDGQIVLDSALFAANQRPAVDVGLSVSRVGGKAQHPALRAASGRLRLDYAQFLELEAFTRFGGLTDARLRAQITRGERIRALITQPRFRALRTLDEVVLLKALAAGALDAMSPDLVAPLRERLPAWLDARIAALTPALAPPRDWLADDAALDALAESVGELIERIAADAARRATAGMPAEDAAGDIGGAFGGEQARGDADRDADHGANREVSREVSPEASREVSREVSCEVSHEADRDAAADAARVAGRAPGRAEPDRAAPRAMPDGPPRAQADGDRASASRPRPDARGDAARTAPSPQGGADANVDAEAEARHKR</sequence>
<reference key="1">
    <citation type="journal article" date="2010" name="Genome Biol. Evol.">
        <title>Continuing evolution of Burkholderia mallei through genome reduction and large-scale rearrangements.</title>
        <authorList>
            <person name="Losada L."/>
            <person name="Ronning C.M."/>
            <person name="DeShazer D."/>
            <person name="Woods D."/>
            <person name="Fedorova N."/>
            <person name="Kim H.S."/>
            <person name="Shabalina S.A."/>
            <person name="Pearson T.R."/>
            <person name="Brinkac L."/>
            <person name="Tan P."/>
            <person name="Nandi T."/>
            <person name="Crabtree J."/>
            <person name="Badger J."/>
            <person name="Beckstrom-Sternberg S."/>
            <person name="Saqib M."/>
            <person name="Schutzer S.E."/>
            <person name="Keim P."/>
            <person name="Nierman W.C."/>
        </authorList>
    </citation>
    <scope>NUCLEOTIDE SEQUENCE [LARGE SCALE GENOMIC DNA]</scope>
    <source>
        <strain>1106a</strain>
    </source>
</reference>
<feature type="chain" id="PRO_0000339024" description="ATP synthase subunit alpha 2">
    <location>
        <begin position="1"/>
        <end position="666"/>
    </location>
</feature>
<feature type="region of interest" description="Disordered" evidence="2">
    <location>
        <begin position="527"/>
        <end position="666"/>
    </location>
</feature>
<feature type="compositionally biased region" description="Basic and acidic residues" evidence="2">
    <location>
        <begin position="545"/>
        <end position="590"/>
    </location>
</feature>
<feature type="compositionally biased region" description="Low complexity" evidence="2">
    <location>
        <begin position="591"/>
        <end position="601"/>
    </location>
</feature>
<feature type="compositionally biased region" description="Basic and acidic residues" evidence="2">
    <location>
        <begin position="623"/>
        <end position="641"/>
    </location>
</feature>
<feature type="binding site" evidence="1">
    <location>
        <begin position="182"/>
        <end position="189"/>
    </location>
    <ligand>
        <name>ATP</name>
        <dbReference type="ChEBI" id="CHEBI:30616"/>
    </ligand>
</feature>
<feature type="site" description="Required for activity" evidence="1">
    <location>
        <position position="375"/>
    </location>
</feature>
<evidence type="ECO:0000255" key="1">
    <source>
        <dbReference type="HAMAP-Rule" id="MF_01346"/>
    </source>
</evidence>
<evidence type="ECO:0000256" key="2">
    <source>
        <dbReference type="SAM" id="MobiDB-lite"/>
    </source>
</evidence>
<keyword id="KW-0066">ATP synthesis</keyword>
<keyword id="KW-0067">ATP-binding</keyword>
<keyword id="KW-0997">Cell inner membrane</keyword>
<keyword id="KW-1003">Cell membrane</keyword>
<keyword id="KW-0139">CF(1)</keyword>
<keyword id="KW-0375">Hydrogen ion transport</keyword>
<keyword id="KW-0406">Ion transport</keyword>
<keyword id="KW-0472">Membrane</keyword>
<keyword id="KW-0547">Nucleotide-binding</keyword>
<keyword id="KW-1278">Translocase</keyword>
<keyword id="KW-0813">Transport</keyword>
<organism>
    <name type="scientific">Burkholderia pseudomallei (strain 1106a)</name>
    <dbReference type="NCBI Taxonomy" id="357348"/>
    <lineage>
        <taxon>Bacteria</taxon>
        <taxon>Pseudomonadati</taxon>
        <taxon>Pseudomonadota</taxon>
        <taxon>Betaproteobacteria</taxon>
        <taxon>Burkholderiales</taxon>
        <taxon>Burkholderiaceae</taxon>
        <taxon>Burkholderia</taxon>
        <taxon>pseudomallei group</taxon>
    </lineage>
</organism>
<accession>A3P8L5</accession>